<evidence type="ECO:0000255" key="1">
    <source>
        <dbReference type="HAMAP-Rule" id="MF_01073"/>
    </source>
</evidence>
<reference key="1">
    <citation type="journal article" date="2009" name="J. Bacteriol.">
        <title>Complete genome sequence and comparative genome analysis of enteropathogenic Escherichia coli O127:H6 strain E2348/69.</title>
        <authorList>
            <person name="Iguchi A."/>
            <person name="Thomson N.R."/>
            <person name="Ogura Y."/>
            <person name="Saunders D."/>
            <person name="Ooka T."/>
            <person name="Henderson I.R."/>
            <person name="Harris D."/>
            <person name="Asadulghani M."/>
            <person name="Kurokawa K."/>
            <person name="Dean P."/>
            <person name="Kenny B."/>
            <person name="Quail M.A."/>
            <person name="Thurston S."/>
            <person name="Dougan G."/>
            <person name="Hayashi T."/>
            <person name="Parkhill J."/>
            <person name="Frankel G."/>
        </authorList>
    </citation>
    <scope>NUCLEOTIDE SEQUENCE [LARGE SCALE GENOMIC DNA]</scope>
    <source>
        <strain>E2348/69 / EPEC</strain>
    </source>
</reference>
<sequence length="150" mass="17723">MKYQQLENLESGWKWKYLVKKHREGELITRYIEASAAQEAVDELLSLENEPVLVNGWIDKHMNPELVNRMKQTIRARRKRHFNAEHQHTRKKSIDLEFIVWQRLAGLAQRRGKTLSETIVQLIEDAENKEKYANKMSSLKQDLQALLGKE</sequence>
<feature type="chain" id="PRO_1000149762" description="Macrodomain Ter protein">
    <location>
        <begin position="1"/>
        <end position="150"/>
    </location>
</feature>
<protein>
    <recommendedName>
        <fullName evidence="1">Macrodomain Ter protein</fullName>
    </recommendedName>
</protein>
<name>MATP_ECO27</name>
<dbReference type="EMBL" id="FM180568">
    <property type="protein sequence ID" value="CAS08490.1"/>
    <property type="molecule type" value="Genomic_DNA"/>
</dbReference>
<dbReference type="RefSeq" id="WP_000877153.1">
    <property type="nucleotide sequence ID" value="NC_011601.1"/>
</dbReference>
<dbReference type="SMR" id="B7UN35"/>
<dbReference type="KEGG" id="ecg:E2348C_0942"/>
<dbReference type="HOGENOM" id="CLU_142157_0_0_6"/>
<dbReference type="Proteomes" id="UP000008205">
    <property type="component" value="Chromosome"/>
</dbReference>
<dbReference type="GO" id="GO:0005737">
    <property type="term" value="C:cytoplasm"/>
    <property type="evidence" value="ECO:0007669"/>
    <property type="project" value="UniProtKB-SubCell"/>
</dbReference>
<dbReference type="GO" id="GO:0043565">
    <property type="term" value="F:sequence-specific DNA binding"/>
    <property type="evidence" value="ECO:0007669"/>
    <property type="project" value="UniProtKB-UniRule"/>
</dbReference>
<dbReference type="GO" id="GO:0051301">
    <property type="term" value="P:cell division"/>
    <property type="evidence" value="ECO:0007669"/>
    <property type="project" value="UniProtKB-UniRule"/>
</dbReference>
<dbReference type="GO" id="GO:0006355">
    <property type="term" value="P:regulation of DNA-templated transcription"/>
    <property type="evidence" value="ECO:0007669"/>
    <property type="project" value="InterPro"/>
</dbReference>
<dbReference type="FunFam" id="1.10.1220.10:FF:000004">
    <property type="entry name" value="Macrodomain Ter protein"/>
    <property type="match status" value="1"/>
</dbReference>
<dbReference type="FunFam" id="1.20.1270.380:FF:000001">
    <property type="entry name" value="Macrodomain Ter protein"/>
    <property type="match status" value="1"/>
</dbReference>
<dbReference type="Gene3D" id="1.20.1270.380">
    <property type="entry name" value="MatP, N-terminal domain"/>
    <property type="match status" value="1"/>
</dbReference>
<dbReference type="Gene3D" id="1.10.1220.10">
    <property type="entry name" value="Met repressor-like"/>
    <property type="match status" value="1"/>
</dbReference>
<dbReference type="HAMAP" id="MF_01073">
    <property type="entry name" value="MatP"/>
    <property type="match status" value="1"/>
</dbReference>
<dbReference type="InterPro" id="IPR013321">
    <property type="entry name" value="Arc_rbn_hlx_hlx"/>
</dbReference>
<dbReference type="InterPro" id="IPR009390">
    <property type="entry name" value="MatP"/>
</dbReference>
<dbReference type="InterPro" id="IPR035375">
    <property type="entry name" value="MatP_C"/>
</dbReference>
<dbReference type="InterPro" id="IPR035087">
    <property type="entry name" value="MatP_N"/>
</dbReference>
<dbReference type="InterPro" id="IPR038339">
    <property type="entry name" value="MatP_N_sf"/>
</dbReference>
<dbReference type="NCBIfam" id="NF003471">
    <property type="entry name" value="PRK05097.1"/>
    <property type="match status" value="1"/>
</dbReference>
<dbReference type="Pfam" id="PF06303">
    <property type="entry name" value="MatP"/>
    <property type="match status" value="1"/>
</dbReference>
<dbReference type="Pfam" id="PF17414">
    <property type="entry name" value="MatP_C"/>
    <property type="match status" value="1"/>
</dbReference>
<accession>B7UN35</accession>
<gene>
    <name evidence="1" type="primary">matP</name>
    <name type="ordered locus">E2348C_0942</name>
</gene>
<comment type="function">
    <text evidence="1">Required for spatial organization of the terminus region of the chromosome (Ter macrodomain) during the cell cycle. Prevents early segregation of duplicated Ter macrodomains during cell division. Binds specifically to matS, which is a 13 bp signature motif repeated within the Ter macrodomain.</text>
</comment>
<comment type="subunit">
    <text evidence="1">Homodimer.</text>
</comment>
<comment type="subcellular location">
    <subcellularLocation>
        <location evidence="1">Cytoplasm</location>
    </subcellularLocation>
</comment>
<comment type="similarity">
    <text evidence="1">Belongs to the MatP family.</text>
</comment>
<organism>
    <name type="scientific">Escherichia coli O127:H6 (strain E2348/69 / EPEC)</name>
    <dbReference type="NCBI Taxonomy" id="574521"/>
    <lineage>
        <taxon>Bacteria</taxon>
        <taxon>Pseudomonadati</taxon>
        <taxon>Pseudomonadota</taxon>
        <taxon>Gammaproteobacteria</taxon>
        <taxon>Enterobacterales</taxon>
        <taxon>Enterobacteriaceae</taxon>
        <taxon>Escherichia</taxon>
    </lineage>
</organism>
<keyword id="KW-0131">Cell cycle</keyword>
<keyword id="KW-0132">Cell division</keyword>
<keyword id="KW-0963">Cytoplasm</keyword>
<keyword id="KW-0238">DNA-binding</keyword>
<keyword id="KW-1185">Reference proteome</keyword>
<proteinExistence type="inferred from homology"/>